<reference key="1">
    <citation type="journal article" date="2000" name="Nucleic Acids Res.">
        <title>Complete genome sequence of the alkaliphilic bacterium Bacillus halodurans and genomic sequence comparison with Bacillus subtilis.</title>
        <authorList>
            <person name="Takami H."/>
            <person name="Nakasone K."/>
            <person name="Takaki Y."/>
            <person name="Maeno G."/>
            <person name="Sasaki R."/>
            <person name="Masui N."/>
            <person name="Fuji F."/>
            <person name="Hirama C."/>
            <person name="Nakamura Y."/>
            <person name="Ogasawara N."/>
            <person name="Kuhara S."/>
            <person name="Horikoshi K."/>
        </authorList>
    </citation>
    <scope>NUCLEOTIDE SEQUENCE [LARGE SCALE GENOMIC DNA]</scope>
    <source>
        <strain>ATCC BAA-125 / DSM 18197 / FERM 7344 / JCM 9153 / C-125</strain>
    </source>
</reference>
<protein>
    <recommendedName>
        <fullName evidence="1">Inosose dehydratase</fullName>
        <ecNumber evidence="1">4.2.1.44</ecNumber>
    </recommendedName>
    <alternativeName>
        <fullName evidence="1">2-keto-myo-inositol dehydratase</fullName>
        <shortName evidence="1">2KMI dehydratase</shortName>
    </alternativeName>
</protein>
<sequence>MADQKILWGIAPIGWRNDDIPEIGAGNTLSHLLSDIVVARFQGTEVGGFFPDAKTLNKELELRNLKIAGQWFSSYLIRDPFESVSKEFHAHCAYLEEVGASVAVVSEQTYSIQQSEQNIFTEKPMFTDSEWLTLCEGLNELGKIAQQYGLTLVYHHHMGTGVQTLAEVDRLMENTDPTLVSLLYDTGHIYVSDNDYMLLLTKHLDRIKHVHFKDVRSDILAKCQEQGQSFLQSFLAGMFTVPGDGCIDFTKVYDVLLTHDYRGWIVVEAEQDPAKAHPLEYALKARQYIDEKLLTTDEMKERI</sequence>
<dbReference type="EC" id="4.2.1.44" evidence="1"/>
<dbReference type="EMBL" id="BA000004">
    <property type="protein sequence ID" value="BAB06036.1"/>
    <property type="molecule type" value="Genomic_DNA"/>
</dbReference>
<dbReference type="PIR" id="E83939">
    <property type="entry name" value="E83939"/>
</dbReference>
<dbReference type="RefSeq" id="WP_010898473.1">
    <property type="nucleotide sequence ID" value="NC_002570.2"/>
</dbReference>
<dbReference type="SMR" id="Q9KAH0"/>
<dbReference type="STRING" id="272558.gene:10728215"/>
<dbReference type="KEGG" id="bha:BH2317"/>
<dbReference type="eggNOG" id="COG1082">
    <property type="taxonomic scope" value="Bacteria"/>
</dbReference>
<dbReference type="HOGENOM" id="CLU_059523_0_0_9"/>
<dbReference type="OrthoDB" id="9779184at2"/>
<dbReference type="UniPathway" id="UPA00076">
    <property type="reaction ID" value="UER00144"/>
</dbReference>
<dbReference type="Proteomes" id="UP000001258">
    <property type="component" value="Chromosome"/>
</dbReference>
<dbReference type="GO" id="GO:0030145">
    <property type="term" value="F:manganese ion binding"/>
    <property type="evidence" value="ECO:0007669"/>
    <property type="project" value="UniProtKB-UniRule"/>
</dbReference>
<dbReference type="GO" id="GO:0050114">
    <property type="term" value="F:myo-inosose-2 dehydratase activity"/>
    <property type="evidence" value="ECO:0007669"/>
    <property type="project" value="UniProtKB-UniRule"/>
</dbReference>
<dbReference type="GO" id="GO:0019310">
    <property type="term" value="P:inositol catabolic process"/>
    <property type="evidence" value="ECO:0007669"/>
    <property type="project" value="UniProtKB-UniRule"/>
</dbReference>
<dbReference type="Gene3D" id="3.20.20.150">
    <property type="entry name" value="Divalent-metal-dependent TIM barrel enzymes"/>
    <property type="match status" value="1"/>
</dbReference>
<dbReference type="HAMAP" id="MF_01672">
    <property type="entry name" value="IolE"/>
    <property type="match status" value="1"/>
</dbReference>
<dbReference type="InterPro" id="IPR023952">
    <property type="entry name" value="IolE"/>
</dbReference>
<dbReference type="InterPro" id="IPR030823">
    <property type="entry name" value="IolE/MocC"/>
</dbReference>
<dbReference type="InterPro" id="IPR050312">
    <property type="entry name" value="IolE/XylAMocC-like"/>
</dbReference>
<dbReference type="InterPro" id="IPR036237">
    <property type="entry name" value="Xyl_isomerase-like_sf"/>
</dbReference>
<dbReference type="InterPro" id="IPR013022">
    <property type="entry name" value="Xyl_isomerase-like_TIM-brl"/>
</dbReference>
<dbReference type="NCBIfam" id="TIGR04379">
    <property type="entry name" value="myo_inos_iolE"/>
    <property type="match status" value="1"/>
</dbReference>
<dbReference type="PANTHER" id="PTHR12110">
    <property type="entry name" value="HYDROXYPYRUVATE ISOMERASE"/>
    <property type="match status" value="1"/>
</dbReference>
<dbReference type="PANTHER" id="PTHR12110:SF41">
    <property type="entry name" value="INOSOSE DEHYDRATASE"/>
    <property type="match status" value="1"/>
</dbReference>
<dbReference type="Pfam" id="PF01261">
    <property type="entry name" value="AP_endonuc_2"/>
    <property type="match status" value="1"/>
</dbReference>
<dbReference type="SUPFAM" id="SSF51658">
    <property type="entry name" value="Xylose isomerase-like"/>
    <property type="match status" value="1"/>
</dbReference>
<gene>
    <name evidence="1" type="primary">iolE</name>
    <name type="ordered locus">BH2317</name>
</gene>
<keyword id="KW-0170">Cobalt</keyword>
<keyword id="KW-0456">Lyase</keyword>
<keyword id="KW-0464">Manganese</keyword>
<keyword id="KW-1185">Reference proteome</keyword>
<evidence type="ECO:0000255" key="1">
    <source>
        <dbReference type="HAMAP-Rule" id="MF_01672"/>
    </source>
</evidence>
<feature type="chain" id="PRO_0000352357" description="Inosose dehydratase">
    <location>
        <begin position="1"/>
        <end position="303"/>
    </location>
</feature>
<accession>Q9KAH0</accession>
<comment type="function">
    <text evidence="1">Catalyzes the dehydration of inosose (2-keto-myo-inositol, 2KMI or 2,4,6/3,5-pentahydroxycyclohexanone) to 3D-(3,5/4)-trihydroxycyclohexane-1,2-dione (D-2,3-diketo-4-deoxy-epi-inositol).</text>
</comment>
<comment type="catalytic activity">
    <reaction evidence="1">
        <text>scyllo-inosose = 3D-3,5/4-trihydroxycyclohexane-1,2-dione + H2O</text>
        <dbReference type="Rhea" id="RHEA:14065"/>
        <dbReference type="ChEBI" id="CHEBI:15377"/>
        <dbReference type="ChEBI" id="CHEBI:17811"/>
        <dbReference type="ChEBI" id="CHEBI:28446"/>
        <dbReference type="EC" id="4.2.1.44"/>
    </reaction>
</comment>
<comment type="cofactor">
    <cofactor evidence="1">
        <name>glutathione</name>
        <dbReference type="ChEBI" id="CHEBI:57925"/>
    </cofactor>
</comment>
<comment type="cofactor">
    <cofactor evidence="1">
        <name>Co(2+)</name>
        <dbReference type="ChEBI" id="CHEBI:48828"/>
    </cofactor>
    <cofactor evidence="1">
        <name>Mn(2+)</name>
        <dbReference type="ChEBI" id="CHEBI:29035"/>
    </cofactor>
</comment>
<comment type="pathway">
    <text evidence="1">Polyol metabolism; myo-inositol degradation into acetyl-CoA; acetyl-CoA from myo-inositol: step 2/7.</text>
</comment>
<comment type="similarity">
    <text evidence="1">Belongs to the IolE/MocC family.</text>
</comment>
<name>IOLE_HALH5</name>
<proteinExistence type="inferred from homology"/>
<organism>
    <name type="scientific">Halalkalibacterium halodurans (strain ATCC BAA-125 / DSM 18197 / FERM 7344 / JCM 9153 / C-125)</name>
    <name type="common">Bacillus halodurans</name>
    <dbReference type="NCBI Taxonomy" id="272558"/>
    <lineage>
        <taxon>Bacteria</taxon>
        <taxon>Bacillati</taxon>
        <taxon>Bacillota</taxon>
        <taxon>Bacilli</taxon>
        <taxon>Bacillales</taxon>
        <taxon>Bacillaceae</taxon>
        <taxon>Halalkalibacterium (ex Joshi et al. 2022)</taxon>
    </lineage>
</organism>